<gene>
    <name evidence="7" type="primary">BGLU41</name>
    <name evidence="9" type="ordered locus">At5g54570</name>
    <name evidence="10" type="ORF">MRB17.7</name>
</gene>
<protein>
    <recommendedName>
        <fullName evidence="7">Putative beta-glucosidase 41</fullName>
        <shortName evidence="7">AtBGLU41</shortName>
        <ecNumber evidence="1">3.2.1.21</ecNumber>
    </recommendedName>
</protein>
<dbReference type="EC" id="3.2.1.21" evidence="1"/>
<dbReference type="EMBL" id="AB016879">
    <property type="protein sequence ID" value="BAB09336.1"/>
    <property type="status" value="ALT_SEQ"/>
    <property type="molecule type" value="Genomic_DNA"/>
</dbReference>
<dbReference type="EMBL" id="CP002688">
    <property type="protein sequence ID" value="AED96511.1"/>
    <property type="molecule type" value="Genomic_DNA"/>
</dbReference>
<dbReference type="RefSeq" id="NP_200268.3">
    <property type="nucleotide sequence ID" value="NM_124837.3"/>
</dbReference>
<dbReference type="SMR" id="Q9FIU7"/>
<dbReference type="FunCoup" id="Q9FIU7">
    <property type="interactions" value="487"/>
</dbReference>
<dbReference type="STRING" id="3702.Q9FIU7"/>
<dbReference type="CAZy" id="GH1">
    <property type="family name" value="Glycoside Hydrolase Family 1"/>
</dbReference>
<dbReference type="GlyCosmos" id="Q9FIU7">
    <property type="glycosylation" value="3 sites, No reported glycans"/>
</dbReference>
<dbReference type="GlyGen" id="Q9FIU7">
    <property type="glycosylation" value="3 sites"/>
</dbReference>
<dbReference type="PaxDb" id="3702-AT5G54570.1"/>
<dbReference type="ProteomicsDB" id="240622"/>
<dbReference type="EnsemblPlants" id="AT5G54570.1">
    <property type="protein sequence ID" value="AT5G54570.1"/>
    <property type="gene ID" value="AT5G54570"/>
</dbReference>
<dbReference type="GeneID" id="835545"/>
<dbReference type="Gramene" id="AT5G54570.1">
    <property type="protein sequence ID" value="AT5G54570.1"/>
    <property type="gene ID" value="AT5G54570"/>
</dbReference>
<dbReference type="KEGG" id="ath:AT5G54570"/>
<dbReference type="Araport" id="AT5G54570"/>
<dbReference type="TAIR" id="AT5G54570">
    <property type="gene designation" value="BGLU41"/>
</dbReference>
<dbReference type="eggNOG" id="KOG0626">
    <property type="taxonomic scope" value="Eukaryota"/>
</dbReference>
<dbReference type="HOGENOM" id="CLU_001859_1_0_1"/>
<dbReference type="InParanoid" id="Q9FIU7"/>
<dbReference type="BioCyc" id="ARA:AT5G54570-MONOMER"/>
<dbReference type="PRO" id="PR:Q9FIU7"/>
<dbReference type="Proteomes" id="UP000006548">
    <property type="component" value="Chromosome 5"/>
</dbReference>
<dbReference type="ExpressionAtlas" id="Q9FIU7">
    <property type="expression patterns" value="baseline and differential"/>
</dbReference>
<dbReference type="GO" id="GO:0008422">
    <property type="term" value="F:beta-glucosidase activity"/>
    <property type="evidence" value="ECO:0007669"/>
    <property type="project" value="UniProtKB-EC"/>
</dbReference>
<dbReference type="GO" id="GO:0005975">
    <property type="term" value="P:carbohydrate metabolic process"/>
    <property type="evidence" value="ECO:0007669"/>
    <property type="project" value="InterPro"/>
</dbReference>
<dbReference type="FunFam" id="3.20.20.80:FF:000020">
    <property type="entry name" value="Beta-glucosidase 12"/>
    <property type="match status" value="1"/>
</dbReference>
<dbReference type="Gene3D" id="3.20.20.80">
    <property type="entry name" value="Glycosidases"/>
    <property type="match status" value="1"/>
</dbReference>
<dbReference type="InterPro" id="IPR001360">
    <property type="entry name" value="Glyco_hydro_1"/>
</dbReference>
<dbReference type="InterPro" id="IPR033132">
    <property type="entry name" value="Glyco_hydro_1_N_CS"/>
</dbReference>
<dbReference type="InterPro" id="IPR017853">
    <property type="entry name" value="Glycoside_hydrolase_SF"/>
</dbReference>
<dbReference type="PANTHER" id="PTHR10353">
    <property type="entry name" value="GLYCOSYL HYDROLASE"/>
    <property type="match status" value="1"/>
</dbReference>
<dbReference type="PANTHER" id="PTHR10353:SF36">
    <property type="entry name" value="LP05116P"/>
    <property type="match status" value="1"/>
</dbReference>
<dbReference type="Pfam" id="PF00232">
    <property type="entry name" value="Glyco_hydro_1"/>
    <property type="match status" value="1"/>
</dbReference>
<dbReference type="PRINTS" id="PR00131">
    <property type="entry name" value="GLHYDRLASE1"/>
</dbReference>
<dbReference type="SUPFAM" id="SSF51445">
    <property type="entry name" value="(Trans)glycosidases"/>
    <property type="match status" value="1"/>
</dbReference>
<dbReference type="PROSITE" id="PS00653">
    <property type="entry name" value="GLYCOSYL_HYDROL_F1_2"/>
    <property type="match status" value="1"/>
</dbReference>
<name>BGL41_ARATH</name>
<keyword id="KW-1015">Disulfide bond</keyword>
<keyword id="KW-0325">Glycoprotein</keyword>
<keyword id="KW-0326">Glycosidase</keyword>
<keyword id="KW-0378">Hydrolase</keyword>
<keyword id="KW-1185">Reference proteome</keyword>
<keyword id="KW-0732">Signal</keyword>
<accession>Q9FIU7</accession>
<proteinExistence type="inferred from homology"/>
<evidence type="ECO:0000250" key="1">
    <source>
        <dbReference type="UniProtKB" id="O64879"/>
    </source>
</evidence>
<evidence type="ECO:0000250" key="2">
    <source>
        <dbReference type="UniProtKB" id="Q1XH05"/>
    </source>
</evidence>
<evidence type="ECO:0000250" key="3">
    <source>
        <dbReference type="UniProtKB" id="Q7XSK0"/>
    </source>
</evidence>
<evidence type="ECO:0000250" key="4">
    <source>
        <dbReference type="UniProtKB" id="Q9SPP9"/>
    </source>
</evidence>
<evidence type="ECO:0000255" key="5"/>
<evidence type="ECO:0000255" key="6">
    <source>
        <dbReference type="PROSITE-ProRule" id="PRU00498"/>
    </source>
</evidence>
<evidence type="ECO:0000303" key="7">
    <source>
    </source>
</evidence>
<evidence type="ECO:0000305" key="8"/>
<evidence type="ECO:0000312" key="9">
    <source>
        <dbReference type="Araport" id="AT5G54570"/>
    </source>
</evidence>
<evidence type="ECO:0000312" key="10">
    <source>
        <dbReference type="EMBL" id="BAB09336.1"/>
    </source>
</evidence>
<comment type="catalytic activity">
    <reaction evidence="1">
        <text>Hydrolysis of terminal, non-reducing beta-D-glucosyl residues with release of beta-D-glucose.</text>
        <dbReference type="EC" id="3.2.1.21"/>
    </reaction>
</comment>
<comment type="similarity">
    <text evidence="8">Belongs to the glycosyl hydrolase 1 family.</text>
</comment>
<comment type="sequence caution" evidence="8">
    <conflict type="erroneous gene model prediction">
        <sequence resource="EMBL-CDS" id="BAB09336"/>
    </conflict>
</comment>
<sequence length="535" mass="61463">MESLMRLVLVLFPFFVVFFVPLDHVSSESISRANFPDGFVFGTASSAYQFEGAVKEGNKGESIWDTFTKEKPGKILDFSNADTTVDQYHRFHNDIDLMKDLRMDAYRFSISWSRIFPNGTGEVNPDGVKYYNSLIDALLAKGIKPYVTLYHWDLPQALEDRYEGWLSREVVDDFEHYAFTCFKAFGDRVKYWITFNEPHGVSIQGYDTGIQAPGRCSLLGHWFCKKGKSSVEPYIVAHNILLSHAAAYHTYQRNFKEKQRGQIGISLDAKWYEPMSDCDEDKDAARRAMDFGLGWFMDPLINGDYPASMKSLVEERLPKITPEMYKTIKGAFDYVGINHYTTLYARNDRTRIRKLILQDASSDSAVITSSFRGGVAIGERAGSSWLHIVPWGIRKLAVYVKDIYGNPPVFITENGMDEKNSPFIDMEKALKDDKRIGFHRDYLSNLSAAIRNDECDVRGYFVWSLLDNWEWNSGYTVRFGIYYVDYKNNLTRIPKASARWFQTILSGSSSTSDSSKLILLEEATEQQQEYKFQEK</sequence>
<organism>
    <name type="scientific">Arabidopsis thaliana</name>
    <name type="common">Mouse-ear cress</name>
    <dbReference type="NCBI Taxonomy" id="3702"/>
    <lineage>
        <taxon>Eukaryota</taxon>
        <taxon>Viridiplantae</taxon>
        <taxon>Streptophyta</taxon>
        <taxon>Embryophyta</taxon>
        <taxon>Tracheophyta</taxon>
        <taxon>Spermatophyta</taxon>
        <taxon>Magnoliopsida</taxon>
        <taxon>eudicotyledons</taxon>
        <taxon>Gunneridae</taxon>
        <taxon>Pentapetalae</taxon>
        <taxon>rosids</taxon>
        <taxon>malvids</taxon>
        <taxon>Brassicales</taxon>
        <taxon>Brassicaceae</taxon>
        <taxon>Camelineae</taxon>
        <taxon>Arabidopsis</taxon>
    </lineage>
</organism>
<reference key="1">
    <citation type="journal article" date="1998" name="DNA Res.">
        <title>Structural analysis of Arabidopsis thaliana chromosome 5. VII. Sequence features of the regions of 1,013,767 bp covered by sixteen physically assigned P1 and TAC clones.</title>
        <authorList>
            <person name="Nakamura Y."/>
            <person name="Sato S."/>
            <person name="Asamizu E."/>
            <person name="Kaneko T."/>
            <person name="Kotani H."/>
            <person name="Miyajima N."/>
            <person name="Tabata S."/>
        </authorList>
    </citation>
    <scope>NUCLEOTIDE SEQUENCE [LARGE SCALE GENOMIC DNA]</scope>
    <source>
        <strain>cv. Columbia</strain>
    </source>
</reference>
<reference key="2">
    <citation type="journal article" date="2017" name="Plant J.">
        <title>Araport11: a complete reannotation of the Arabidopsis thaliana reference genome.</title>
        <authorList>
            <person name="Cheng C.Y."/>
            <person name="Krishnakumar V."/>
            <person name="Chan A.P."/>
            <person name="Thibaud-Nissen F."/>
            <person name="Schobel S."/>
            <person name="Town C.D."/>
        </authorList>
    </citation>
    <scope>GENOME REANNOTATION</scope>
    <source>
        <strain>cv. Columbia</strain>
    </source>
</reference>
<reference key="3">
    <citation type="journal article" date="2004" name="Plant Mol. Biol.">
        <title>Functional genomic analysis of Arabidopsis thaliana glycoside hydrolase family 1.</title>
        <authorList>
            <person name="Xu Z."/>
            <person name="Escamilla-Trevino L.L."/>
            <person name="Zeng L."/>
            <person name="Lalgondar M."/>
            <person name="Bevan D.R."/>
            <person name="Winkel B.S.J."/>
            <person name="Mohamed A."/>
            <person name="Cheng C.-L."/>
            <person name="Shih M.-C."/>
            <person name="Poulton J.E."/>
            <person name="Esen A."/>
        </authorList>
    </citation>
    <scope>GENE FAMILY</scope>
    <scope>NOMENCLATURE</scope>
</reference>
<feature type="signal peptide" evidence="5">
    <location>
        <begin position="1"/>
        <end position="27"/>
    </location>
</feature>
<feature type="chain" id="PRO_0000390314" description="Putative beta-glucosidase 41">
    <location>
        <begin position="28"/>
        <end position="535"/>
    </location>
</feature>
<feature type="active site" description="Proton donor" evidence="3">
    <location>
        <position position="197"/>
    </location>
</feature>
<feature type="active site" description="Nucleophile" evidence="3">
    <location>
        <position position="413"/>
    </location>
</feature>
<feature type="binding site" evidence="3">
    <location>
        <position position="49"/>
    </location>
    <ligand>
        <name>a beta-D-glucoside</name>
        <dbReference type="ChEBI" id="CHEBI:22798"/>
    </ligand>
</feature>
<feature type="binding site" evidence="3">
    <location>
        <position position="151"/>
    </location>
    <ligand>
        <name>a beta-D-glucoside</name>
        <dbReference type="ChEBI" id="CHEBI:22798"/>
    </ligand>
</feature>
<feature type="binding site" evidence="3">
    <location>
        <begin position="196"/>
        <end position="197"/>
    </location>
    <ligand>
        <name>a beta-D-glucoside</name>
        <dbReference type="ChEBI" id="CHEBI:22798"/>
    </ligand>
</feature>
<feature type="binding site" evidence="3">
    <location>
        <position position="340"/>
    </location>
    <ligand>
        <name>a beta-D-glucoside</name>
        <dbReference type="ChEBI" id="CHEBI:22798"/>
    </ligand>
</feature>
<feature type="binding site" evidence="4">
    <location>
        <position position="413"/>
    </location>
    <ligand>
        <name>a beta-D-glucoside</name>
        <dbReference type="ChEBI" id="CHEBI:22798"/>
    </ligand>
</feature>
<feature type="binding site" evidence="3">
    <location>
        <position position="463"/>
    </location>
    <ligand>
        <name>a beta-D-glucoside</name>
        <dbReference type="ChEBI" id="CHEBI:22798"/>
    </ligand>
</feature>
<feature type="binding site" evidence="3">
    <location>
        <begin position="470"/>
        <end position="471"/>
    </location>
    <ligand>
        <name>a beta-D-glucoside</name>
        <dbReference type="ChEBI" id="CHEBI:22798"/>
    </ligand>
</feature>
<feature type="binding site" evidence="2">
    <location>
        <position position="479"/>
    </location>
    <ligand>
        <name>a beta-D-glucoside</name>
        <dbReference type="ChEBI" id="CHEBI:22798"/>
    </ligand>
</feature>
<feature type="glycosylation site" description="N-linked (GlcNAc...) asparagine" evidence="6">
    <location>
        <position position="118"/>
    </location>
</feature>
<feature type="glycosylation site" description="N-linked (GlcNAc...) asparagine" evidence="6">
    <location>
        <position position="445"/>
    </location>
</feature>
<feature type="glycosylation site" description="N-linked (GlcNAc...) asparagine" evidence="6">
    <location>
        <position position="489"/>
    </location>
</feature>
<feature type="disulfide bond" evidence="3">
    <location>
        <begin position="216"/>
        <end position="224"/>
    </location>
</feature>